<name>FAS2_ORYSJ</name>
<feature type="chain" id="PRO_0000420142" description="Chromatin assembly factor 1 subunit FAS2 homolog">
    <location>
        <begin position="1"/>
        <end position="505"/>
    </location>
</feature>
<feature type="repeat" description="WD 1">
    <location>
        <begin position="11"/>
        <end position="50"/>
    </location>
</feature>
<feature type="repeat" description="WD 2">
    <location>
        <begin position="62"/>
        <end position="101"/>
    </location>
</feature>
<feature type="repeat" description="WD 3">
    <location>
        <begin position="110"/>
        <end position="149"/>
    </location>
</feature>
<feature type="repeat" description="WD 4">
    <location>
        <begin position="152"/>
        <end position="191"/>
    </location>
</feature>
<feature type="repeat" description="WD 5">
    <location>
        <begin position="223"/>
        <end position="268"/>
    </location>
</feature>
<feature type="repeat" description="WD 6">
    <location>
        <begin position="278"/>
        <end position="333"/>
    </location>
</feature>
<feature type="repeat" description="WD 7">
    <location>
        <begin position="337"/>
        <end position="378"/>
    </location>
</feature>
<feature type="region of interest" description="Disordered" evidence="2">
    <location>
        <begin position="479"/>
        <end position="505"/>
    </location>
</feature>
<feature type="sequence conflict" description="In Ref. 5; AK121823." evidence="3" ref="5">
    <original>N</original>
    <variation>D</variation>
    <location>
        <position position="68"/>
    </location>
</feature>
<sequence length="505" mass="55320">MRGGTVQINWHEQQPVLTLDFHPVSRRLATGGSDHDIKIWVIASDDSDKKLPTATYHSSLSSHSSAVNVLRFSPSGENLASGADGGGIIIWKLHSTDDGEAWKVQKTLLFHHKDVLDLQWSQDGAFLVSASVDNSCIVWDAIKGSVQQKLEGHLHYVQGVAWDPLGQYIASLSSDRTCRIYANKPQGKSKNTDRMNFVCQHTLVKAEHQNHDESKPPVRAHLFHDETLPSFFRRLAWSPDGSFLVLPAGLCKYSSEVINTAYVMSRRDLSRPAIQLPGASKAIVAVRFCPVLFKLRGSQSDCFFKLPYRVIFAVATLNSLYVYDTESVAPILIHAGLHYAAITDIAWSSDAKYLAVSSRDCFCTIIEFENEELGLPYNLSGTKELDEGNTNCENMKPLKVDSMEIDAGSSKAKIKASSAAVEVTPSPPVLAQNNILMTKDVAEGNATSENDRPSAVDNMEVDVGENKAKMEVTPVAVQVTAPPVSTKNSASSKPTKKRITPIAIN</sequence>
<protein>
    <recommendedName>
        <fullName>Chromatin assembly factor 1 subunit FAS2 homolog</fullName>
        <shortName>CAF-1 subunit FAS2 homolog</shortName>
    </recommendedName>
    <alternativeName>
        <fullName>CAF-1 p60 homolog</fullName>
    </alternativeName>
    <alternativeName>
        <fullName>Protein FASCIATA 2 homolog</fullName>
    </alternativeName>
</protein>
<organism>
    <name type="scientific">Oryza sativa subsp. japonica</name>
    <name type="common">Rice</name>
    <dbReference type="NCBI Taxonomy" id="39947"/>
    <lineage>
        <taxon>Eukaryota</taxon>
        <taxon>Viridiplantae</taxon>
        <taxon>Streptophyta</taxon>
        <taxon>Embryophyta</taxon>
        <taxon>Tracheophyta</taxon>
        <taxon>Spermatophyta</taxon>
        <taxon>Magnoliopsida</taxon>
        <taxon>Liliopsida</taxon>
        <taxon>Poales</taxon>
        <taxon>Poaceae</taxon>
        <taxon>BOP clade</taxon>
        <taxon>Oryzoideae</taxon>
        <taxon>Oryzeae</taxon>
        <taxon>Oryzinae</taxon>
        <taxon>Oryza</taxon>
        <taxon>Oryza sativa</taxon>
    </lineage>
</organism>
<accession>Q6ZD63</accession>
<accession>A0A0N7KP55</accession>
<comment type="function">
    <text evidence="1">Component of the chromatin assembly factor complex (CAF-1) involved in chromatin assembly following DNA replication and DNA repair. Required for several aspects of development, including apical meristem maintenance by regulating the durations of the S- and G2-phases of the cell cycle through its chromatin assembly activity (By similarity).</text>
</comment>
<comment type="subunit">
    <text evidence="1">Component of the chromatin assembly factor 1 (CAF-1) complex, composed of FSM (FAS1), FAS2 and MSI1.</text>
</comment>
<comment type="subcellular location">
    <subcellularLocation>
        <location evidence="1">Nucleus</location>
    </subcellularLocation>
</comment>
<comment type="similarity">
    <text evidence="3">Belongs to the WD repeat HIR1 family.</text>
</comment>
<keyword id="KW-0156">Chromatin regulator</keyword>
<keyword id="KW-0227">DNA damage</keyword>
<keyword id="KW-0233">DNA recombination</keyword>
<keyword id="KW-0234">DNA repair</keyword>
<keyword id="KW-0539">Nucleus</keyword>
<keyword id="KW-1185">Reference proteome</keyword>
<keyword id="KW-0677">Repeat</keyword>
<keyword id="KW-0804">Transcription</keyword>
<keyword id="KW-0805">Transcription regulation</keyword>
<keyword id="KW-0853">WD repeat</keyword>
<reference key="1">
    <citation type="journal article" date="2005" name="Nature">
        <title>The map-based sequence of the rice genome.</title>
        <authorList>
            <consortium name="International rice genome sequencing project (IRGSP)"/>
        </authorList>
    </citation>
    <scope>NUCLEOTIDE SEQUENCE [LARGE SCALE GENOMIC DNA]</scope>
    <source>
        <strain>cv. Nipponbare</strain>
    </source>
</reference>
<reference key="2">
    <citation type="journal article" date="2008" name="Nucleic Acids Res.">
        <title>The rice annotation project database (RAP-DB): 2008 update.</title>
        <authorList>
            <consortium name="The rice annotation project (RAP)"/>
        </authorList>
    </citation>
    <scope>GENOME REANNOTATION</scope>
    <source>
        <strain>cv. Nipponbare</strain>
    </source>
</reference>
<reference key="3">
    <citation type="journal article" date="2013" name="Rice">
        <title>Improvement of the Oryza sativa Nipponbare reference genome using next generation sequence and optical map data.</title>
        <authorList>
            <person name="Kawahara Y."/>
            <person name="de la Bastide M."/>
            <person name="Hamilton J.P."/>
            <person name="Kanamori H."/>
            <person name="McCombie W.R."/>
            <person name="Ouyang S."/>
            <person name="Schwartz D.C."/>
            <person name="Tanaka T."/>
            <person name="Wu J."/>
            <person name="Zhou S."/>
            <person name="Childs K.L."/>
            <person name="Davidson R.M."/>
            <person name="Lin H."/>
            <person name="Quesada-Ocampo L."/>
            <person name="Vaillancourt B."/>
            <person name="Sakai H."/>
            <person name="Lee S.S."/>
            <person name="Kim J."/>
            <person name="Numa H."/>
            <person name="Itoh T."/>
            <person name="Buell C.R."/>
            <person name="Matsumoto T."/>
        </authorList>
    </citation>
    <scope>GENOME REANNOTATION</scope>
    <source>
        <strain>cv. Nipponbare</strain>
    </source>
</reference>
<reference key="4">
    <citation type="journal article" date="2005" name="PLoS Biol.">
        <title>The genomes of Oryza sativa: a history of duplications.</title>
        <authorList>
            <person name="Yu J."/>
            <person name="Wang J."/>
            <person name="Lin W."/>
            <person name="Li S."/>
            <person name="Li H."/>
            <person name="Zhou J."/>
            <person name="Ni P."/>
            <person name="Dong W."/>
            <person name="Hu S."/>
            <person name="Zeng C."/>
            <person name="Zhang J."/>
            <person name="Zhang Y."/>
            <person name="Li R."/>
            <person name="Xu Z."/>
            <person name="Li S."/>
            <person name="Li X."/>
            <person name="Zheng H."/>
            <person name="Cong L."/>
            <person name="Lin L."/>
            <person name="Yin J."/>
            <person name="Geng J."/>
            <person name="Li G."/>
            <person name="Shi J."/>
            <person name="Liu J."/>
            <person name="Lv H."/>
            <person name="Li J."/>
            <person name="Wang J."/>
            <person name="Deng Y."/>
            <person name="Ran L."/>
            <person name="Shi X."/>
            <person name="Wang X."/>
            <person name="Wu Q."/>
            <person name="Li C."/>
            <person name="Ren X."/>
            <person name="Wang J."/>
            <person name="Wang X."/>
            <person name="Li D."/>
            <person name="Liu D."/>
            <person name="Zhang X."/>
            <person name="Ji Z."/>
            <person name="Zhao W."/>
            <person name="Sun Y."/>
            <person name="Zhang Z."/>
            <person name="Bao J."/>
            <person name="Han Y."/>
            <person name="Dong L."/>
            <person name="Ji J."/>
            <person name="Chen P."/>
            <person name="Wu S."/>
            <person name="Liu J."/>
            <person name="Xiao Y."/>
            <person name="Bu D."/>
            <person name="Tan J."/>
            <person name="Yang L."/>
            <person name="Ye C."/>
            <person name="Zhang J."/>
            <person name="Xu J."/>
            <person name="Zhou Y."/>
            <person name="Yu Y."/>
            <person name="Zhang B."/>
            <person name="Zhuang S."/>
            <person name="Wei H."/>
            <person name="Liu B."/>
            <person name="Lei M."/>
            <person name="Yu H."/>
            <person name="Li Y."/>
            <person name="Xu H."/>
            <person name="Wei S."/>
            <person name="He X."/>
            <person name="Fang L."/>
            <person name="Zhang Z."/>
            <person name="Zhang Y."/>
            <person name="Huang X."/>
            <person name="Su Z."/>
            <person name="Tong W."/>
            <person name="Li J."/>
            <person name="Tong Z."/>
            <person name="Li S."/>
            <person name="Ye J."/>
            <person name="Wang L."/>
            <person name="Fang L."/>
            <person name="Lei T."/>
            <person name="Chen C.-S."/>
            <person name="Chen H.-C."/>
            <person name="Xu Z."/>
            <person name="Li H."/>
            <person name="Huang H."/>
            <person name="Zhang F."/>
            <person name="Xu H."/>
            <person name="Li N."/>
            <person name="Zhao C."/>
            <person name="Li S."/>
            <person name="Dong L."/>
            <person name="Huang Y."/>
            <person name="Li L."/>
            <person name="Xi Y."/>
            <person name="Qi Q."/>
            <person name="Li W."/>
            <person name="Zhang B."/>
            <person name="Hu W."/>
            <person name="Zhang Y."/>
            <person name="Tian X."/>
            <person name="Jiao Y."/>
            <person name="Liang X."/>
            <person name="Jin J."/>
            <person name="Gao L."/>
            <person name="Zheng W."/>
            <person name="Hao B."/>
            <person name="Liu S.-M."/>
            <person name="Wang W."/>
            <person name="Yuan L."/>
            <person name="Cao M."/>
            <person name="McDermott J."/>
            <person name="Samudrala R."/>
            <person name="Wang J."/>
            <person name="Wong G.K.-S."/>
            <person name="Yang H."/>
        </authorList>
    </citation>
    <scope>NUCLEOTIDE SEQUENCE [LARGE SCALE GENOMIC DNA]</scope>
    <source>
        <strain>cv. Nipponbare</strain>
    </source>
</reference>
<reference key="5">
    <citation type="journal article" date="2003" name="Science">
        <title>Collection, mapping, and annotation of over 28,000 cDNA clones from japonica rice.</title>
        <authorList>
            <consortium name="The rice full-length cDNA consortium"/>
        </authorList>
    </citation>
    <scope>NUCLEOTIDE SEQUENCE [LARGE SCALE MRNA]</scope>
    <source>
        <strain>cv. Nipponbare</strain>
    </source>
</reference>
<gene>
    <name type="primary">FAS2</name>
    <name type="ordered locus">Os08g0108200</name>
    <name type="ordered locus">LOC_Os08g01680</name>
    <name type="ORF">OsJ_25768</name>
    <name type="ORF">P0450B04.31</name>
</gene>
<dbReference type="EMBL" id="AP004462">
    <property type="protein sequence ID" value="BAD09397.1"/>
    <property type="molecule type" value="Genomic_DNA"/>
</dbReference>
<dbReference type="EMBL" id="AP008214">
    <property type="protein sequence ID" value="BAF22718.1"/>
    <property type="molecule type" value="Genomic_DNA"/>
</dbReference>
<dbReference type="EMBL" id="AP014964">
    <property type="protein sequence ID" value="BAT03474.1"/>
    <property type="molecule type" value="Genomic_DNA"/>
</dbReference>
<dbReference type="EMBL" id="CM000145">
    <property type="protein sequence ID" value="EAZ41259.1"/>
    <property type="molecule type" value="Genomic_DNA"/>
</dbReference>
<dbReference type="EMBL" id="AK121823">
    <property type="status" value="NOT_ANNOTATED_CDS"/>
    <property type="molecule type" value="mRNA"/>
</dbReference>
<dbReference type="RefSeq" id="XP_015648431.1">
    <property type="nucleotide sequence ID" value="XM_015792945.1"/>
</dbReference>
<dbReference type="SMR" id="Q6ZD63"/>
<dbReference type="FunCoup" id="Q6ZD63">
    <property type="interactions" value="1571"/>
</dbReference>
<dbReference type="STRING" id="39947.Q6ZD63"/>
<dbReference type="PaxDb" id="39947-Q6ZD63"/>
<dbReference type="EnsemblPlants" id="Os08t0108200-01">
    <property type="protein sequence ID" value="Os08t0108200-01"/>
    <property type="gene ID" value="Os08g0108200"/>
</dbReference>
<dbReference type="Gramene" id="Os08t0108200-01">
    <property type="protein sequence ID" value="Os08t0108200-01"/>
    <property type="gene ID" value="Os08g0108200"/>
</dbReference>
<dbReference type="KEGG" id="dosa:Os08g0108200"/>
<dbReference type="eggNOG" id="KOG1009">
    <property type="taxonomic scope" value="Eukaryota"/>
</dbReference>
<dbReference type="HOGENOM" id="CLU_010127_4_0_1"/>
<dbReference type="InParanoid" id="Q6ZD63"/>
<dbReference type="OMA" id="QIYWHES"/>
<dbReference type="OrthoDB" id="71227at2759"/>
<dbReference type="Proteomes" id="UP000000763">
    <property type="component" value="Chromosome 8"/>
</dbReference>
<dbReference type="Proteomes" id="UP000007752">
    <property type="component" value="Chromosome 8"/>
</dbReference>
<dbReference type="Proteomes" id="UP000059680">
    <property type="component" value="Chromosome 8"/>
</dbReference>
<dbReference type="GO" id="GO:0033186">
    <property type="term" value="C:CAF-1 complex"/>
    <property type="evidence" value="ECO:0000318"/>
    <property type="project" value="GO_Central"/>
</dbReference>
<dbReference type="GO" id="GO:0005634">
    <property type="term" value="C:nucleus"/>
    <property type="evidence" value="ECO:0000318"/>
    <property type="project" value="GO_Central"/>
</dbReference>
<dbReference type="GO" id="GO:0006335">
    <property type="term" value="P:DNA replication-dependent chromatin assembly"/>
    <property type="evidence" value="ECO:0007669"/>
    <property type="project" value="InterPro"/>
</dbReference>
<dbReference type="GO" id="GO:0000724">
    <property type="term" value="P:double-strand break repair via homologous recombination"/>
    <property type="evidence" value="ECO:0007669"/>
    <property type="project" value="EnsemblPlants"/>
</dbReference>
<dbReference type="GO" id="GO:0031507">
    <property type="term" value="P:heterochromatin formation"/>
    <property type="evidence" value="ECO:0007669"/>
    <property type="project" value="EnsemblPlants"/>
</dbReference>
<dbReference type="GO" id="GO:0048366">
    <property type="term" value="P:leaf development"/>
    <property type="evidence" value="ECO:0007669"/>
    <property type="project" value="EnsemblPlants"/>
</dbReference>
<dbReference type="GO" id="GO:0009933">
    <property type="term" value="P:meristem structural organization"/>
    <property type="evidence" value="ECO:0007669"/>
    <property type="project" value="EnsemblPlants"/>
</dbReference>
<dbReference type="GO" id="GO:0006334">
    <property type="term" value="P:nucleosome assembly"/>
    <property type="evidence" value="ECO:0000318"/>
    <property type="project" value="GO_Central"/>
</dbReference>
<dbReference type="GO" id="GO:0009555">
    <property type="term" value="P:pollen development"/>
    <property type="evidence" value="ECO:0007669"/>
    <property type="project" value="EnsemblPlants"/>
</dbReference>
<dbReference type="GO" id="GO:0010026">
    <property type="term" value="P:trichome differentiation"/>
    <property type="evidence" value="ECO:0007669"/>
    <property type="project" value="EnsemblPlants"/>
</dbReference>
<dbReference type="FunFam" id="2.130.10.10:FF:000466">
    <property type="entry name" value="Chromatin assembly factor 1 subunit FAS2"/>
    <property type="match status" value="1"/>
</dbReference>
<dbReference type="FunFam" id="2.130.10.10:FF:001465">
    <property type="entry name" value="Chromatin assembly factor 1 subunit FAS2 homolog"/>
    <property type="match status" value="1"/>
</dbReference>
<dbReference type="Gene3D" id="2.130.10.10">
    <property type="entry name" value="YVTN repeat-like/Quinoprotein amine dehydrogenase"/>
    <property type="match status" value="2"/>
</dbReference>
<dbReference type="InterPro" id="IPR055410">
    <property type="entry name" value="CAF1B_HIR1_beta-prop"/>
</dbReference>
<dbReference type="InterPro" id="IPR001632">
    <property type="entry name" value="Gprotein_B"/>
</dbReference>
<dbReference type="InterPro" id="IPR045145">
    <property type="entry name" value="PTHR15271"/>
</dbReference>
<dbReference type="InterPro" id="IPR015943">
    <property type="entry name" value="WD40/YVTN_repeat-like_dom_sf"/>
</dbReference>
<dbReference type="InterPro" id="IPR036322">
    <property type="entry name" value="WD40_repeat_dom_sf"/>
</dbReference>
<dbReference type="InterPro" id="IPR001680">
    <property type="entry name" value="WD40_rpt"/>
</dbReference>
<dbReference type="PANTHER" id="PTHR15271">
    <property type="entry name" value="CHROMATIN ASSEMBLY FACTOR 1 SUBUNIT B"/>
    <property type="match status" value="1"/>
</dbReference>
<dbReference type="PANTHER" id="PTHR15271:SF4">
    <property type="entry name" value="CHROMATIN ASSEMBLY FACTOR 1 SUBUNIT B"/>
    <property type="match status" value="1"/>
</dbReference>
<dbReference type="Pfam" id="PF24105">
    <property type="entry name" value="Beta-prop_CAF1B_HIR1"/>
    <property type="match status" value="1"/>
</dbReference>
<dbReference type="PRINTS" id="PR00319">
    <property type="entry name" value="GPROTEINB"/>
</dbReference>
<dbReference type="SMART" id="SM00320">
    <property type="entry name" value="WD40"/>
    <property type="match status" value="5"/>
</dbReference>
<dbReference type="SUPFAM" id="SSF50978">
    <property type="entry name" value="WD40 repeat-like"/>
    <property type="match status" value="1"/>
</dbReference>
<dbReference type="PROSITE" id="PS00678">
    <property type="entry name" value="WD_REPEATS_1"/>
    <property type="match status" value="1"/>
</dbReference>
<dbReference type="PROSITE" id="PS50082">
    <property type="entry name" value="WD_REPEATS_2"/>
    <property type="match status" value="4"/>
</dbReference>
<dbReference type="PROSITE" id="PS50294">
    <property type="entry name" value="WD_REPEATS_REGION"/>
    <property type="match status" value="1"/>
</dbReference>
<proteinExistence type="evidence at transcript level"/>
<evidence type="ECO:0000250" key="1"/>
<evidence type="ECO:0000256" key="2">
    <source>
        <dbReference type="SAM" id="MobiDB-lite"/>
    </source>
</evidence>
<evidence type="ECO:0000305" key="3"/>